<name>ASIP_MACSY</name>
<protein>
    <recommendedName>
        <fullName>Agouti-signaling protein</fullName>
        <shortName>ASP</shortName>
    </recommendedName>
    <alternativeName>
        <fullName>Agouti switch protein</fullName>
    </alternativeName>
</protein>
<feature type="signal peptide" evidence="4">
    <location>
        <begin position="1"/>
        <end position="22"/>
    </location>
</feature>
<feature type="chain" id="PRO_0000285059" description="Agouti-signaling protein">
    <location>
        <begin position="23"/>
        <end position="132"/>
    </location>
</feature>
<feature type="domain" description="Agouti" evidence="5">
    <location>
        <begin position="93"/>
        <end position="132"/>
    </location>
</feature>
<feature type="region of interest" description="Disordered" evidence="6">
    <location>
        <begin position="62"/>
        <end position="88"/>
    </location>
</feature>
<feature type="compositionally biased region" description="Basic and acidic residues" evidence="6">
    <location>
        <begin position="63"/>
        <end position="79"/>
    </location>
</feature>
<feature type="glycosylation site" description="N-linked (GlcNAc...) asparagine" evidence="4">
    <location>
        <position position="39"/>
    </location>
</feature>
<feature type="disulfide bond" evidence="5">
    <location>
        <begin position="93"/>
        <end position="108"/>
    </location>
</feature>
<feature type="disulfide bond" evidence="5">
    <location>
        <begin position="100"/>
        <end position="114"/>
    </location>
</feature>
<feature type="disulfide bond" evidence="5">
    <location>
        <begin position="107"/>
        <end position="125"/>
    </location>
</feature>
<feature type="disulfide bond" evidence="5">
    <location>
        <begin position="111"/>
        <end position="132"/>
    </location>
</feature>
<feature type="disulfide bond" evidence="5">
    <location>
        <begin position="116"/>
        <end position="123"/>
    </location>
</feature>
<accession>A1YL66</accession>
<accession>A8CEN5</accession>
<gene>
    <name type="primary">ASIP</name>
</gene>
<organism>
    <name type="scientific">Macaca sylvanus</name>
    <name type="common">Barbary macaque</name>
    <dbReference type="NCBI Taxonomy" id="9546"/>
    <lineage>
        <taxon>Eukaryota</taxon>
        <taxon>Metazoa</taxon>
        <taxon>Chordata</taxon>
        <taxon>Craniata</taxon>
        <taxon>Vertebrata</taxon>
        <taxon>Euteleostomi</taxon>
        <taxon>Mammalia</taxon>
        <taxon>Eutheria</taxon>
        <taxon>Euarchontoglires</taxon>
        <taxon>Primates</taxon>
        <taxon>Haplorrhini</taxon>
        <taxon>Catarrhini</taxon>
        <taxon>Cercopithecidae</taxon>
        <taxon>Cercopithecinae</taxon>
        <taxon>Macaca</taxon>
    </lineage>
</organism>
<keyword id="KW-1015">Disulfide bond</keyword>
<keyword id="KW-0325">Glycoprotein</keyword>
<keyword id="KW-0960">Knottin</keyword>
<keyword id="KW-0964">Secreted</keyword>
<keyword id="KW-0732">Signal</keyword>
<comment type="function">
    <text evidence="3">Involved in the regulation of melanogenesis. The binding of ASP to MC1R precludes alpha-MSH initiated signaling and thus blocks production of cAMP, leading to a down-regulation of eumelanogenesis (brown/black pigment) and thus increasing synthesis of pheomelanin (yellow/red pigment) (By similarity).</text>
</comment>
<comment type="subcellular location">
    <subcellularLocation>
        <location evidence="2">Secreted</location>
    </subcellularLocation>
</comment>
<comment type="domain">
    <text evidence="1">The presence of a 'disulfide through disulfide knot' structurally defines this protein as a knottin.</text>
</comment>
<sequence>MDVTRLLLATLLVFLCFFTAYSHLPPEEKLRDDRSLRSNSSVNLLDFPSVSIVALNKKSKQISRKEAEKKRSSKKEASMKKVARPRTPLSAPCVATRDSCKPPAPACCDPCASCQCRFFRSACSCRVLSLNC</sequence>
<proteinExistence type="inferred from homology"/>
<reference key="1">
    <citation type="journal article" date="2006" name="Mamm. Genome">
        <title>Investigation of the role of the agouti signaling protein gene (ASIP) in coat color evolution in primates.</title>
        <authorList>
            <person name="Mundy N.I."/>
            <person name="Kelly J."/>
        </authorList>
    </citation>
    <scope>NUCLEOTIDE SEQUENCE [GENOMIC DNA]</scope>
</reference>
<reference key="2">
    <citation type="submission" date="2007-03" db="EMBL/GenBank/DDBJ databases">
        <title>Association of the agouti signaling protein gene with coat color variation in the macaques.</title>
        <authorList>
            <person name="Nakayama K."/>
            <person name="Shotake T."/>
            <person name="Takenaka O."/>
            <person name="Ishida T."/>
        </authorList>
    </citation>
    <scope>NUCLEOTIDE SEQUENCE [GENOMIC DNA]</scope>
</reference>
<dbReference type="EMBL" id="EF094483">
    <property type="protein sequence ID" value="ABL84281.1"/>
    <property type="molecule type" value="Genomic_DNA"/>
</dbReference>
<dbReference type="EMBL" id="AB299220">
    <property type="protein sequence ID" value="BAF80804.1"/>
    <property type="molecule type" value="Genomic_DNA"/>
</dbReference>
<dbReference type="GlyCosmos" id="A1YL66">
    <property type="glycosylation" value="1 site, No reported glycans"/>
</dbReference>
<dbReference type="GO" id="GO:0005615">
    <property type="term" value="C:extracellular space"/>
    <property type="evidence" value="ECO:0000250"/>
    <property type="project" value="UniProtKB"/>
</dbReference>
<dbReference type="GO" id="GO:0031779">
    <property type="term" value="F:melanocortin receptor binding"/>
    <property type="evidence" value="ECO:0007669"/>
    <property type="project" value="TreeGrafter"/>
</dbReference>
<dbReference type="GO" id="GO:0005184">
    <property type="term" value="F:neuropeptide hormone activity"/>
    <property type="evidence" value="ECO:0007669"/>
    <property type="project" value="TreeGrafter"/>
</dbReference>
<dbReference type="GO" id="GO:0009755">
    <property type="term" value="P:hormone-mediated signaling pathway"/>
    <property type="evidence" value="ECO:0007669"/>
    <property type="project" value="InterPro"/>
</dbReference>
<dbReference type="GO" id="GO:0042438">
    <property type="term" value="P:melanin biosynthetic process"/>
    <property type="evidence" value="ECO:0000250"/>
    <property type="project" value="UniProtKB"/>
</dbReference>
<dbReference type="GO" id="GO:0032438">
    <property type="term" value="P:melanosome organization"/>
    <property type="evidence" value="ECO:0007669"/>
    <property type="project" value="TreeGrafter"/>
</dbReference>
<dbReference type="FunFam" id="4.10.760.10:FF:000002">
    <property type="entry name" value="Agouti-signaling protein"/>
    <property type="match status" value="1"/>
</dbReference>
<dbReference type="Gene3D" id="4.10.760.10">
    <property type="entry name" value="Agouti domain"/>
    <property type="match status" value="1"/>
</dbReference>
<dbReference type="InterPro" id="IPR007733">
    <property type="entry name" value="Agouti"/>
</dbReference>
<dbReference type="InterPro" id="IPR027300">
    <property type="entry name" value="Agouti_dom"/>
</dbReference>
<dbReference type="InterPro" id="IPR036836">
    <property type="entry name" value="Agouti_dom_sf"/>
</dbReference>
<dbReference type="PANTHER" id="PTHR16551">
    <property type="entry name" value="AGOUTI RELATED"/>
    <property type="match status" value="1"/>
</dbReference>
<dbReference type="PANTHER" id="PTHR16551:SF1">
    <property type="entry name" value="AGOUTI-SIGNALING PROTEIN"/>
    <property type="match status" value="1"/>
</dbReference>
<dbReference type="Pfam" id="PF05039">
    <property type="entry name" value="Agouti"/>
    <property type="match status" value="1"/>
</dbReference>
<dbReference type="SMART" id="SM00792">
    <property type="entry name" value="Agouti"/>
    <property type="match status" value="1"/>
</dbReference>
<dbReference type="SUPFAM" id="SSF57055">
    <property type="entry name" value="Agouti-related protein"/>
    <property type="match status" value="1"/>
</dbReference>
<dbReference type="PROSITE" id="PS60024">
    <property type="entry name" value="AGOUTI_1"/>
    <property type="match status" value="1"/>
</dbReference>
<dbReference type="PROSITE" id="PS51150">
    <property type="entry name" value="AGOUTI_2"/>
    <property type="match status" value="1"/>
</dbReference>
<evidence type="ECO:0000250" key="1"/>
<evidence type="ECO:0000250" key="2">
    <source>
        <dbReference type="UniProtKB" id="P42127"/>
    </source>
</evidence>
<evidence type="ECO:0000250" key="3">
    <source>
        <dbReference type="UniProtKB" id="Q03288"/>
    </source>
</evidence>
<evidence type="ECO:0000255" key="4"/>
<evidence type="ECO:0000255" key="5">
    <source>
        <dbReference type="PROSITE-ProRule" id="PRU00494"/>
    </source>
</evidence>
<evidence type="ECO:0000256" key="6">
    <source>
        <dbReference type="SAM" id="MobiDB-lite"/>
    </source>
</evidence>